<feature type="chain" id="PRO_0000174992" description="Thymidine kinase">
    <location>
        <begin position="1"/>
        <end position="203"/>
    </location>
</feature>
<feature type="active site" description="Proton acceptor" evidence="1">
    <location>
        <position position="100"/>
    </location>
</feature>
<feature type="binding site" evidence="1">
    <location>
        <begin position="21"/>
        <end position="28"/>
    </location>
    <ligand>
        <name>ATP</name>
        <dbReference type="ChEBI" id="CHEBI:30616"/>
    </ligand>
</feature>
<feature type="binding site" evidence="1">
    <location>
        <begin position="99"/>
        <end position="102"/>
    </location>
    <ligand>
        <name>ATP</name>
        <dbReference type="ChEBI" id="CHEBI:30616"/>
    </ligand>
</feature>
<feature type="binding site" evidence="1">
    <location>
        <position position="156"/>
    </location>
    <ligand>
        <name>Zn(2+)</name>
        <dbReference type="ChEBI" id="CHEBI:29105"/>
    </ligand>
</feature>
<feature type="binding site" evidence="1">
    <location>
        <position position="159"/>
    </location>
    <ligand>
        <name>Zn(2+)</name>
        <dbReference type="ChEBI" id="CHEBI:29105"/>
    </ligand>
</feature>
<feature type="binding site" evidence="1">
    <location>
        <position position="194"/>
    </location>
    <ligand>
        <name>Zn(2+)</name>
        <dbReference type="ChEBI" id="CHEBI:29105"/>
    </ligand>
</feature>
<feature type="binding site" evidence="1">
    <location>
        <position position="197"/>
    </location>
    <ligand>
        <name>Zn(2+)</name>
        <dbReference type="ChEBI" id="CHEBI:29105"/>
    </ligand>
</feature>
<dbReference type="EC" id="2.7.1.21" evidence="1"/>
<dbReference type="EMBL" id="AE017263">
    <property type="protein sequence ID" value="AAT75991.1"/>
    <property type="molecule type" value="Genomic_DNA"/>
</dbReference>
<dbReference type="RefSeq" id="WP_011183531.1">
    <property type="nucleotide sequence ID" value="NC_006055.1"/>
</dbReference>
<dbReference type="RefSeq" id="YP_053875.1">
    <property type="nucleotide sequence ID" value="NC_006055.1"/>
</dbReference>
<dbReference type="SMR" id="Q6F0I2"/>
<dbReference type="STRING" id="265311.Mfl635"/>
<dbReference type="PaxDb" id="265311-Mfl635"/>
<dbReference type="EnsemblBacteria" id="AAT75991">
    <property type="protein sequence ID" value="AAT75991"/>
    <property type="gene ID" value="Mfl635"/>
</dbReference>
<dbReference type="GeneID" id="2897887"/>
<dbReference type="KEGG" id="mfl:Mfl635"/>
<dbReference type="PATRIC" id="fig|265311.5.peg.637"/>
<dbReference type="eggNOG" id="COG1435">
    <property type="taxonomic scope" value="Bacteria"/>
</dbReference>
<dbReference type="HOGENOM" id="CLU_064400_3_0_14"/>
<dbReference type="OrthoDB" id="9781579at2"/>
<dbReference type="Proteomes" id="UP000006647">
    <property type="component" value="Chromosome"/>
</dbReference>
<dbReference type="GO" id="GO:0005829">
    <property type="term" value="C:cytosol"/>
    <property type="evidence" value="ECO:0007669"/>
    <property type="project" value="TreeGrafter"/>
</dbReference>
<dbReference type="GO" id="GO:0005524">
    <property type="term" value="F:ATP binding"/>
    <property type="evidence" value="ECO:0007669"/>
    <property type="project" value="UniProtKB-UniRule"/>
</dbReference>
<dbReference type="GO" id="GO:0004797">
    <property type="term" value="F:thymidine kinase activity"/>
    <property type="evidence" value="ECO:0007669"/>
    <property type="project" value="UniProtKB-UniRule"/>
</dbReference>
<dbReference type="GO" id="GO:0008270">
    <property type="term" value="F:zinc ion binding"/>
    <property type="evidence" value="ECO:0007669"/>
    <property type="project" value="UniProtKB-UniRule"/>
</dbReference>
<dbReference type="GO" id="GO:0071897">
    <property type="term" value="P:DNA biosynthetic process"/>
    <property type="evidence" value="ECO:0007669"/>
    <property type="project" value="UniProtKB-KW"/>
</dbReference>
<dbReference type="GO" id="GO:0046104">
    <property type="term" value="P:thymidine metabolic process"/>
    <property type="evidence" value="ECO:0007669"/>
    <property type="project" value="TreeGrafter"/>
</dbReference>
<dbReference type="FunFam" id="3.40.50.300:FF:000948">
    <property type="entry name" value="Thymidine kinase"/>
    <property type="match status" value="1"/>
</dbReference>
<dbReference type="Gene3D" id="3.30.60.20">
    <property type="match status" value="1"/>
</dbReference>
<dbReference type="Gene3D" id="3.40.50.300">
    <property type="entry name" value="P-loop containing nucleotide triphosphate hydrolases"/>
    <property type="match status" value="1"/>
</dbReference>
<dbReference type="HAMAP" id="MF_00124">
    <property type="entry name" value="Thymidine_kinase"/>
    <property type="match status" value="1"/>
</dbReference>
<dbReference type="InterPro" id="IPR027417">
    <property type="entry name" value="P-loop_NTPase"/>
</dbReference>
<dbReference type="InterPro" id="IPR001267">
    <property type="entry name" value="Thymidine_kinase"/>
</dbReference>
<dbReference type="InterPro" id="IPR020633">
    <property type="entry name" value="Thymidine_kinase_CS"/>
</dbReference>
<dbReference type="NCBIfam" id="NF003296">
    <property type="entry name" value="PRK04296.1-1"/>
    <property type="match status" value="1"/>
</dbReference>
<dbReference type="PANTHER" id="PTHR11441">
    <property type="entry name" value="THYMIDINE KINASE"/>
    <property type="match status" value="1"/>
</dbReference>
<dbReference type="PANTHER" id="PTHR11441:SF0">
    <property type="entry name" value="THYMIDINE KINASE, CYTOSOLIC"/>
    <property type="match status" value="1"/>
</dbReference>
<dbReference type="Pfam" id="PF00265">
    <property type="entry name" value="TK"/>
    <property type="match status" value="1"/>
</dbReference>
<dbReference type="PIRSF" id="PIRSF035805">
    <property type="entry name" value="TK_cell"/>
    <property type="match status" value="1"/>
</dbReference>
<dbReference type="SUPFAM" id="SSF57716">
    <property type="entry name" value="Glucocorticoid receptor-like (DNA-binding domain)"/>
    <property type="match status" value="1"/>
</dbReference>
<dbReference type="SUPFAM" id="SSF52540">
    <property type="entry name" value="P-loop containing nucleoside triphosphate hydrolases"/>
    <property type="match status" value="1"/>
</dbReference>
<dbReference type="PROSITE" id="PS00603">
    <property type="entry name" value="TK_CELLULAR_TYPE"/>
    <property type="match status" value="1"/>
</dbReference>
<reference key="1">
    <citation type="submission" date="2004-06" db="EMBL/GenBank/DDBJ databases">
        <authorList>
            <person name="Birren B.W."/>
            <person name="Stange-Thomann N."/>
            <person name="Hafez N."/>
            <person name="DeCaprio D."/>
            <person name="Fisher S."/>
            <person name="Butler J."/>
            <person name="Elkins T."/>
            <person name="Kodira C.D."/>
            <person name="Major J."/>
            <person name="Wang S."/>
            <person name="Nicol R."/>
            <person name="Nusbaum C."/>
        </authorList>
    </citation>
    <scope>NUCLEOTIDE SEQUENCE [LARGE SCALE GENOMIC DNA]</scope>
    <source>
        <strain>ATCC 33453 / NBRC 100688 / NCTC 11704 / L1</strain>
    </source>
</reference>
<protein>
    <recommendedName>
        <fullName evidence="1">Thymidine kinase</fullName>
        <ecNumber evidence="1">2.7.1.21</ecNumber>
    </recommendedName>
</protein>
<gene>
    <name evidence="1" type="primary">tdk</name>
    <name type="ordered locus">Mfl635</name>
</gene>
<comment type="catalytic activity">
    <reaction evidence="1">
        <text>thymidine + ATP = dTMP + ADP + H(+)</text>
        <dbReference type="Rhea" id="RHEA:19129"/>
        <dbReference type="ChEBI" id="CHEBI:15378"/>
        <dbReference type="ChEBI" id="CHEBI:17748"/>
        <dbReference type="ChEBI" id="CHEBI:30616"/>
        <dbReference type="ChEBI" id="CHEBI:63528"/>
        <dbReference type="ChEBI" id="CHEBI:456216"/>
        <dbReference type="EC" id="2.7.1.21"/>
    </reaction>
</comment>
<comment type="subunit">
    <text evidence="1">Homotetramer.</text>
</comment>
<comment type="subcellular location">
    <subcellularLocation>
        <location evidence="1">Cytoplasm</location>
    </subcellularLocation>
</comment>
<comment type="similarity">
    <text evidence="1">Belongs to the thymidine kinase family.</text>
</comment>
<keyword id="KW-0067">ATP-binding</keyword>
<keyword id="KW-0963">Cytoplasm</keyword>
<keyword id="KW-0237">DNA synthesis</keyword>
<keyword id="KW-0418">Kinase</keyword>
<keyword id="KW-0479">Metal-binding</keyword>
<keyword id="KW-0547">Nucleotide-binding</keyword>
<keyword id="KW-1185">Reference proteome</keyword>
<keyword id="KW-0808">Transferase</keyword>
<keyword id="KW-0862">Zinc</keyword>
<sequence length="203" mass="22998">MIPNRDTIEQKQLGWVELITGCMFAGKTEEFIKRLRRHAFAKRNVIAFKPVIDTRYAVNEVASHAGTLLPSIPVNSTAELKEKLEAKILEKKVDVVGIDEIQFFDEAIVDYIEELADRGIIVIVTGLDKDFRSQPFKNVDRILPLAEMVDKLTAICQKCGNFANRTQRIIDGKPADWNSPLILVDGNDSYEARCRNCYQIEKG</sequence>
<name>KITH_MESFL</name>
<organism>
    <name type="scientific">Mesoplasma florum (strain ATCC 33453 / NBRC 100688 / NCTC 11704 / L1)</name>
    <name type="common">Acholeplasma florum</name>
    <dbReference type="NCBI Taxonomy" id="265311"/>
    <lineage>
        <taxon>Bacteria</taxon>
        <taxon>Bacillati</taxon>
        <taxon>Mycoplasmatota</taxon>
        <taxon>Mollicutes</taxon>
        <taxon>Entomoplasmatales</taxon>
        <taxon>Entomoplasmataceae</taxon>
        <taxon>Mesoplasma</taxon>
    </lineage>
</organism>
<proteinExistence type="inferred from homology"/>
<evidence type="ECO:0000255" key="1">
    <source>
        <dbReference type="HAMAP-Rule" id="MF_00124"/>
    </source>
</evidence>
<accession>Q6F0I2</accession>